<keyword id="KW-1035">Host cytoplasm</keyword>
<keyword id="KW-1048">Host nucleus</keyword>
<keyword id="KW-0945">Host-virus interaction</keyword>
<keyword id="KW-1090">Inhibition of host innate immune response by virus</keyword>
<keyword id="KW-0426">Late protein</keyword>
<keyword id="KW-1185">Reference proteome</keyword>
<keyword id="KW-0899">Viral immunoevasion</keyword>
<keyword id="KW-0946">Virion</keyword>
<keyword id="KW-0920">Virion tegument</keyword>
<feature type="chain" id="PRO_0000417840" description="Cytoplasmic envelopment protein 2">
    <location>
        <begin position="1"/>
        <end position="345"/>
    </location>
</feature>
<feature type="region of interest" description="Nuclear localization signal 1" evidence="1">
    <location>
        <begin position="26"/>
        <end position="35"/>
    </location>
</feature>
<feature type="region of interest" description="Nuclear export signal" evidence="1">
    <location>
        <begin position="55"/>
        <end position="63"/>
    </location>
</feature>
<feature type="region of interest" description="Nuclear localization signal 2" evidence="1">
    <location>
        <begin position="90"/>
        <end position="94"/>
    </location>
</feature>
<name>CEP2_HCMVM</name>
<accession>F5HAC7</accession>
<proteinExistence type="inferred from homology"/>
<evidence type="ECO:0000250" key="1">
    <source>
        <dbReference type="UniProtKB" id="P16800"/>
    </source>
</evidence>
<evidence type="ECO:0000255" key="2">
    <source>
        <dbReference type="HAMAP-Rule" id="MF_04039"/>
    </source>
</evidence>
<sequence>MAWRSGLCETDSRTLKQFLQEECMWKLVGKSRKHREYRAVACRSTIFSPEDDGSCILCQLLLFYRDGEWILCLCCNGRYQGHYGVGHVHRRRRRICHLPTLYQLSFGGPLGPASIDFLPSFSQVTSSMTCDGITPDVIYEVCMLVPQDEAKRILVKGHGAMDLTCQKAVTLGGAGAWLLPRPEGYTLFFYILCYDLFTSCGNRCDIPSMTRLMAAATACGQAGCSFCTDHEGHVDPTGNYVGCTPDMGRCLCYVPCGPMTQSLIHNEEPATFFCESDDAKYLCAVGSKTAAQVTLGDGLDYHIGVKDSEGRWLPVKTDVWDLVKVEEPVSRMIVCSCPVLKNLVH</sequence>
<dbReference type="EMBL" id="AY446894">
    <property type="protein sequence ID" value="AAR31645.1"/>
    <property type="molecule type" value="Genomic_DNA"/>
</dbReference>
<dbReference type="RefSeq" id="YP_081541.1">
    <property type="nucleotide sequence ID" value="NC_006273.2"/>
</dbReference>
<dbReference type="DNASU" id="3077496"/>
<dbReference type="GeneID" id="3077496"/>
<dbReference type="KEGG" id="vg:3077496"/>
<dbReference type="Reactome" id="R-HSA-9609690">
    <property type="pathway name" value="HCMV Early Events"/>
</dbReference>
<dbReference type="Reactome" id="R-HSA-9610379">
    <property type="pathway name" value="HCMV Late Events"/>
</dbReference>
<dbReference type="Proteomes" id="UP000000938">
    <property type="component" value="Segment"/>
</dbReference>
<dbReference type="GO" id="GO:0042025">
    <property type="term" value="C:host cell nucleus"/>
    <property type="evidence" value="ECO:0007669"/>
    <property type="project" value="UniProtKB-SubCell"/>
</dbReference>
<dbReference type="GO" id="GO:0072517">
    <property type="term" value="C:host cell viral assembly compartment"/>
    <property type="evidence" value="ECO:0000304"/>
    <property type="project" value="Reactome"/>
</dbReference>
<dbReference type="GO" id="GO:0019033">
    <property type="term" value="C:viral tegument"/>
    <property type="evidence" value="ECO:0000304"/>
    <property type="project" value="Reactome"/>
</dbReference>
<dbReference type="GO" id="GO:0052170">
    <property type="term" value="P:symbiont-mediated suppression of host innate immune response"/>
    <property type="evidence" value="ECO:0007669"/>
    <property type="project" value="UniProtKB-KW"/>
</dbReference>
<dbReference type="HAMAP" id="MF_04039">
    <property type="entry name" value="HSV_CEP2"/>
    <property type="match status" value="1"/>
</dbReference>
<dbReference type="InterPro" id="IPR004286">
    <property type="entry name" value="Herpes_UL16/UL94"/>
</dbReference>
<dbReference type="Pfam" id="PF03044">
    <property type="entry name" value="Herpes_UL16"/>
    <property type="match status" value="1"/>
</dbReference>
<protein>
    <recommendedName>
        <fullName evidence="2">Cytoplasmic envelopment protein 2</fullName>
    </recommendedName>
</protein>
<organismHost>
    <name type="scientific">Homo sapiens</name>
    <name type="common">Human</name>
    <dbReference type="NCBI Taxonomy" id="9606"/>
</organismHost>
<gene>
    <name type="primary">UL94</name>
</gene>
<reference key="1">
    <citation type="journal article" date="2004" name="J. Gen. Virol.">
        <title>Genetic content of wild-type human cytomegalovirus.</title>
        <authorList>
            <person name="Dolan A."/>
            <person name="Cunningham C."/>
            <person name="Hector R.D."/>
            <person name="Hassan-Walker A.F."/>
            <person name="Lee L."/>
            <person name="Addison C."/>
            <person name="Dargan D.J."/>
            <person name="McGeoch D.J."/>
            <person name="Gatherer D."/>
            <person name="Emery V.C."/>
            <person name="Griffiths P.D."/>
            <person name="Sinzger C."/>
            <person name="McSharry B.P."/>
            <person name="Wilkinson G.W.G."/>
            <person name="Davison A.J."/>
        </authorList>
    </citation>
    <scope>NUCLEOTIDE SEQUENCE [LARGE SCALE GENOMIC DNA]</scope>
</reference>
<organism>
    <name type="scientific">Human cytomegalovirus (strain Merlin)</name>
    <name type="common">HHV-5</name>
    <name type="synonym">Human herpesvirus 5</name>
    <dbReference type="NCBI Taxonomy" id="295027"/>
    <lineage>
        <taxon>Viruses</taxon>
        <taxon>Duplodnaviria</taxon>
        <taxon>Heunggongvirae</taxon>
        <taxon>Peploviricota</taxon>
        <taxon>Herviviricetes</taxon>
        <taxon>Herpesvirales</taxon>
        <taxon>Orthoherpesviridae</taxon>
        <taxon>Betaherpesvirinae</taxon>
        <taxon>Cytomegalovirus</taxon>
        <taxon>Cytomegalovirus humanbeta5</taxon>
        <taxon>Human cytomegalovirus</taxon>
    </lineage>
</organism>
<comment type="function">
    <text evidence="1 2">Plays a critical role in cytoplasmic virus egress. Participates in the final step of tegumentation and envelope acquisition within the host cytoplasm by directly interacting with the capsid. Upon virion binding to target cell, a signaling cascade is triggered to disrupt the interaction with the capsid, thereby preparing capsid uncoating (By similarity). Additionally, antagonizes the viral DNA-triggered antiviral immune response by targeting host STING1 and preventing its dimerization and trafficking.</text>
</comment>
<comment type="subunit">
    <text evidence="1 2">Interacts with cytoplasmic envelopment protein 3 and with the capsid (By similarity). Interacts with host STING1; this interaction prevents viral DNA-triggered antiviral immune response (By similarity).</text>
</comment>
<comment type="subcellular location">
    <subcellularLocation>
        <location evidence="2">Virion tegument</location>
    </subcellularLocation>
    <subcellularLocation>
        <location evidence="2">Host cytoplasm</location>
    </subcellularLocation>
    <subcellularLocation>
        <location evidence="2">Host nucleus</location>
    </subcellularLocation>
    <text evidence="2">Localizes in the host nucleus up to 18 hours postinfection, but at later times localizes to punctate, cytoplasmic structures.</text>
</comment>
<comment type="similarity">
    <text evidence="2">Belongs to the herpesviridae cytoplasmic envelopment protein 2 family.</text>
</comment>